<name>PDXB_PSE14</name>
<sequence>MRIVADENIPLLDAFFAHFGEIHRLPGRAIDRAAVANADILLVRSVTPVTRELLEGSPVRFVGTCTIGTDHLDLDGFQQAGIQWASAPGCNARGVVDYVLGSLLTLAEIEGVDLAQRTYGVVGAGQVGGRLVDVLKALGWNVLVCDPPRKSAEGGDFVSLDEILQRCDVISLHTPLSKAGASATWHLLDETRLRQLRQGAWLINASRGAVVDNTALHDVLHEREDLQAVLDVWEGEPQVNVALADLCVLGTPHIAGYSLDGRQRGTAQIYQALCAFLGQPAVIKLDDLLPKPWLAQVSLDASSDPVWALNMLCRGVYDPRRDDADFRRSLTGDTASQRLAFDALRKHYPPRREIEGLKVRLEGESGGLAQLVRALGAVLV</sequence>
<keyword id="KW-0963">Cytoplasm</keyword>
<keyword id="KW-0520">NAD</keyword>
<keyword id="KW-0560">Oxidoreductase</keyword>
<keyword id="KW-0664">Pyridoxine biosynthesis</keyword>
<dbReference type="EC" id="1.1.1.290" evidence="1"/>
<dbReference type="EMBL" id="CP000058">
    <property type="protein sequence ID" value="AAZ37470.1"/>
    <property type="status" value="ALT_INIT"/>
    <property type="molecule type" value="Genomic_DNA"/>
</dbReference>
<dbReference type="RefSeq" id="WP_011168214.1">
    <property type="nucleotide sequence ID" value="NC_005773.3"/>
</dbReference>
<dbReference type="SMR" id="Q48KQ3"/>
<dbReference type="KEGG" id="psp:PSPPH_1788"/>
<dbReference type="eggNOG" id="COG0111">
    <property type="taxonomic scope" value="Bacteria"/>
</dbReference>
<dbReference type="HOGENOM" id="CLU_019796_4_0_6"/>
<dbReference type="UniPathway" id="UPA00244">
    <property type="reaction ID" value="UER00310"/>
</dbReference>
<dbReference type="Proteomes" id="UP000000551">
    <property type="component" value="Chromosome"/>
</dbReference>
<dbReference type="GO" id="GO:0005829">
    <property type="term" value="C:cytosol"/>
    <property type="evidence" value="ECO:0007669"/>
    <property type="project" value="TreeGrafter"/>
</dbReference>
<dbReference type="GO" id="GO:0033711">
    <property type="term" value="F:4-phosphoerythronate dehydrogenase activity"/>
    <property type="evidence" value="ECO:0007669"/>
    <property type="project" value="UniProtKB-EC"/>
</dbReference>
<dbReference type="GO" id="GO:0051287">
    <property type="term" value="F:NAD binding"/>
    <property type="evidence" value="ECO:0007669"/>
    <property type="project" value="InterPro"/>
</dbReference>
<dbReference type="GO" id="GO:0046983">
    <property type="term" value="F:protein dimerization activity"/>
    <property type="evidence" value="ECO:0007669"/>
    <property type="project" value="InterPro"/>
</dbReference>
<dbReference type="GO" id="GO:0036001">
    <property type="term" value="P:'de novo' pyridoxal 5'-phosphate biosynthetic process"/>
    <property type="evidence" value="ECO:0007669"/>
    <property type="project" value="TreeGrafter"/>
</dbReference>
<dbReference type="GO" id="GO:0008615">
    <property type="term" value="P:pyridoxine biosynthetic process"/>
    <property type="evidence" value="ECO:0007669"/>
    <property type="project" value="UniProtKB-UniRule"/>
</dbReference>
<dbReference type="CDD" id="cd12158">
    <property type="entry name" value="ErythrP_dh"/>
    <property type="match status" value="1"/>
</dbReference>
<dbReference type="Gene3D" id="3.30.1370.170">
    <property type="match status" value="1"/>
</dbReference>
<dbReference type="Gene3D" id="3.40.50.720">
    <property type="entry name" value="NAD(P)-binding Rossmann-like Domain"/>
    <property type="match status" value="2"/>
</dbReference>
<dbReference type="HAMAP" id="MF_01825">
    <property type="entry name" value="PdxB"/>
    <property type="match status" value="1"/>
</dbReference>
<dbReference type="InterPro" id="IPR006139">
    <property type="entry name" value="D-isomer_2_OHA_DH_cat_dom"/>
</dbReference>
<dbReference type="InterPro" id="IPR029753">
    <property type="entry name" value="D-isomer_DH_CS"/>
</dbReference>
<dbReference type="InterPro" id="IPR006140">
    <property type="entry name" value="D-isomer_DH_NAD-bd"/>
</dbReference>
<dbReference type="InterPro" id="IPR020921">
    <property type="entry name" value="Erythronate-4-P_DHase"/>
</dbReference>
<dbReference type="InterPro" id="IPR024531">
    <property type="entry name" value="Erythronate-4-P_DHase_dimer"/>
</dbReference>
<dbReference type="InterPro" id="IPR036291">
    <property type="entry name" value="NAD(P)-bd_dom_sf"/>
</dbReference>
<dbReference type="InterPro" id="IPR038251">
    <property type="entry name" value="PdxB_dimer_sf"/>
</dbReference>
<dbReference type="NCBIfam" id="NF001309">
    <property type="entry name" value="PRK00257.1"/>
    <property type="match status" value="1"/>
</dbReference>
<dbReference type="PANTHER" id="PTHR42938">
    <property type="entry name" value="FORMATE DEHYDROGENASE 1"/>
    <property type="match status" value="1"/>
</dbReference>
<dbReference type="PANTHER" id="PTHR42938:SF9">
    <property type="entry name" value="FORMATE DEHYDROGENASE 1"/>
    <property type="match status" value="1"/>
</dbReference>
<dbReference type="Pfam" id="PF00389">
    <property type="entry name" value="2-Hacid_dh"/>
    <property type="match status" value="1"/>
</dbReference>
<dbReference type="Pfam" id="PF02826">
    <property type="entry name" value="2-Hacid_dh_C"/>
    <property type="match status" value="1"/>
</dbReference>
<dbReference type="Pfam" id="PF11890">
    <property type="entry name" value="DUF3410"/>
    <property type="match status" value="1"/>
</dbReference>
<dbReference type="SUPFAM" id="SSF52283">
    <property type="entry name" value="Formate/glycerate dehydrogenase catalytic domain-like"/>
    <property type="match status" value="1"/>
</dbReference>
<dbReference type="SUPFAM" id="SSF51735">
    <property type="entry name" value="NAD(P)-binding Rossmann-fold domains"/>
    <property type="match status" value="1"/>
</dbReference>
<dbReference type="PROSITE" id="PS00671">
    <property type="entry name" value="D_2_HYDROXYACID_DH_3"/>
    <property type="match status" value="1"/>
</dbReference>
<reference key="1">
    <citation type="journal article" date="2005" name="J. Bacteriol.">
        <title>Whole-genome sequence analysis of Pseudomonas syringae pv. phaseolicola 1448A reveals divergence among pathovars in genes involved in virulence and transposition.</title>
        <authorList>
            <person name="Joardar V."/>
            <person name="Lindeberg M."/>
            <person name="Jackson R.W."/>
            <person name="Selengut J."/>
            <person name="Dodson R."/>
            <person name="Brinkac L.M."/>
            <person name="Daugherty S.C."/>
            <person name="DeBoy R.T."/>
            <person name="Durkin A.S."/>
            <person name="Gwinn Giglio M."/>
            <person name="Madupu R."/>
            <person name="Nelson W.C."/>
            <person name="Rosovitz M.J."/>
            <person name="Sullivan S.A."/>
            <person name="Crabtree J."/>
            <person name="Creasy T."/>
            <person name="Davidsen T.M."/>
            <person name="Haft D.H."/>
            <person name="Zafar N."/>
            <person name="Zhou L."/>
            <person name="Halpin R."/>
            <person name="Holley T."/>
            <person name="Khouri H.M."/>
            <person name="Feldblyum T.V."/>
            <person name="White O."/>
            <person name="Fraser C.M."/>
            <person name="Chatterjee A.K."/>
            <person name="Cartinhour S."/>
            <person name="Schneider D."/>
            <person name="Mansfield J.W."/>
            <person name="Collmer A."/>
            <person name="Buell R."/>
        </authorList>
    </citation>
    <scope>NUCLEOTIDE SEQUENCE [LARGE SCALE GENOMIC DNA]</scope>
    <source>
        <strain>1448A / Race 6</strain>
    </source>
</reference>
<proteinExistence type="inferred from homology"/>
<evidence type="ECO:0000255" key="1">
    <source>
        <dbReference type="HAMAP-Rule" id="MF_01825"/>
    </source>
</evidence>
<evidence type="ECO:0000305" key="2"/>
<comment type="function">
    <text evidence="1">Catalyzes the oxidation of erythronate-4-phosphate to 3-hydroxy-2-oxo-4-phosphonooxybutanoate.</text>
</comment>
<comment type="catalytic activity">
    <reaction evidence="1">
        <text>4-phospho-D-erythronate + NAD(+) = (R)-3-hydroxy-2-oxo-4-phosphooxybutanoate + NADH + H(+)</text>
        <dbReference type="Rhea" id="RHEA:18829"/>
        <dbReference type="ChEBI" id="CHEBI:15378"/>
        <dbReference type="ChEBI" id="CHEBI:57540"/>
        <dbReference type="ChEBI" id="CHEBI:57945"/>
        <dbReference type="ChEBI" id="CHEBI:58538"/>
        <dbReference type="ChEBI" id="CHEBI:58766"/>
        <dbReference type="EC" id="1.1.1.290"/>
    </reaction>
</comment>
<comment type="pathway">
    <text evidence="1">Cofactor biosynthesis; pyridoxine 5'-phosphate biosynthesis; pyridoxine 5'-phosphate from D-erythrose 4-phosphate: step 2/5.</text>
</comment>
<comment type="subunit">
    <text evidence="1">Homodimer.</text>
</comment>
<comment type="subcellular location">
    <subcellularLocation>
        <location evidence="1">Cytoplasm</location>
    </subcellularLocation>
</comment>
<comment type="similarity">
    <text evidence="1">Belongs to the D-isomer specific 2-hydroxyacid dehydrogenase family. PdxB subfamily.</text>
</comment>
<comment type="sequence caution" evidence="2">
    <conflict type="erroneous initiation">
        <sequence resource="EMBL-CDS" id="AAZ37470"/>
    </conflict>
</comment>
<protein>
    <recommendedName>
        <fullName evidence="1">Erythronate-4-phosphate dehydrogenase</fullName>
        <ecNumber evidence="1">1.1.1.290</ecNumber>
    </recommendedName>
</protein>
<accession>Q48KQ3</accession>
<feature type="chain" id="PRO_0000297455" description="Erythronate-4-phosphate dehydrogenase">
    <location>
        <begin position="1"/>
        <end position="380"/>
    </location>
</feature>
<feature type="active site" evidence="1">
    <location>
        <position position="207"/>
    </location>
</feature>
<feature type="active site" evidence="1">
    <location>
        <position position="236"/>
    </location>
</feature>
<feature type="active site" description="Proton donor" evidence="1">
    <location>
        <position position="253"/>
    </location>
</feature>
<feature type="binding site" evidence="1">
    <location>
        <position position="45"/>
    </location>
    <ligand>
        <name>substrate</name>
    </ligand>
</feature>
<feature type="binding site" evidence="1">
    <location>
        <position position="66"/>
    </location>
    <ligand>
        <name>substrate</name>
    </ligand>
</feature>
<feature type="binding site" evidence="1">
    <location>
        <begin position="126"/>
        <end position="127"/>
    </location>
    <ligand>
        <name>NAD(+)</name>
        <dbReference type="ChEBI" id="CHEBI:57540"/>
    </ligand>
</feature>
<feature type="binding site" evidence="1">
    <location>
        <position position="146"/>
    </location>
    <ligand>
        <name>NAD(+)</name>
        <dbReference type="ChEBI" id="CHEBI:57540"/>
    </ligand>
</feature>
<feature type="binding site" evidence="1">
    <location>
        <position position="174"/>
    </location>
    <ligand>
        <name>NAD(+)</name>
        <dbReference type="ChEBI" id="CHEBI:57540"/>
    </ligand>
</feature>
<feature type="binding site" evidence="1">
    <location>
        <begin position="205"/>
        <end position="207"/>
    </location>
    <ligand>
        <name>NAD(+)</name>
        <dbReference type="ChEBI" id="CHEBI:57540"/>
    </ligand>
</feature>
<feature type="binding site" evidence="1">
    <location>
        <position position="231"/>
    </location>
    <ligand>
        <name>NAD(+)</name>
        <dbReference type="ChEBI" id="CHEBI:57540"/>
    </ligand>
</feature>
<feature type="binding site" evidence="1">
    <location>
        <position position="256"/>
    </location>
    <ligand>
        <name>NAD(+)</name>
        <dbReference type="ChEBI" id="CHEBI:57540"/>
    </ligand>
</feature>
<feature type="binding site" evidence="1">
    <location>
        <position position="257"/>
    </location>
    <ligand>
        <name>substrate</name>
    </ligand>
</feature>
<organism>
    <name type="scientific">Pseudomonas savastanoi pv. phaseolicola (strain 1448A / Race 6)</name>
    <name type="common">Pseudomonas syringae pv. phaseolicola (strain 1448A / Race 6)</name>
    <dbReference type="NCBI Taxonomy" id="264730"/>
    <lineage>
        <taxon>Bacteria</taxon>
        <taxon>Pseudomonadati</taxon>
        <taxon>Pseudomonadota</taxon>
        <taxon>Gammaproteobacteria</taxon>
        <taxon>Pseudomonadales</taxon>
        <taxon>Pseudomonadaceae</taxon>
        <taxon>Pseudomonas</taxon>
    </lineage>
</organism>
<gene>
    <name evidence="1" type="primary">pdxB</name>
    <name type="ordered locus">PSPPH_1788</name>
</gene>